<feature type="chain" id="PRO_1000090889" description="Cysteine--tRNA ligase">
    <location>
        <begin position="1"/>
        <end position="461"/>
    </location>
</feature>
<feature type="short sequence motif" description="'HIGH' region">
    <location>
        <begin position="30"/>
        <end position="40"/>
    </location>
</feature>
<feature type="short sequence motif" description="'KMSKS' region">
    <location>
        <begin position="266"/>
        <end position="270"/>
    </location>
</feature>
<feature type="binding site" evidence="1">
    <location>
        <position position="28"/>
    </location>
    <ligand>
        <name>Zn(2+)</name>
        <dbReference type="ChEBI" id="CHEBI:29105"/>
    </ligand>
</feature>
<feature type="binding site" evidence="1">
    <location>
        <position position="209"/>
    </location>
    <ligand>
        <name>Zn(2+)</name>
        <dbReference type="ChEBI" id="CHEBI:29105"/>
    </ligand>
</feature>
<feature type="binding site" evidence="1">
    <location>
        <position position="234"/>
    </location>
    <ligand>
        <name>Zn(2+)</name>
        <dbReference type="ChEBI" id="CHEBI:29105"/>
    </ligand>
</feature>
<feature type="binding site" evidence="1">
    <location>
        <position position="238"/>
    </location>
    <ligand>
        <name>Zn(2+)</name>
        <dbReference type="ChEBI" id="CHEBI:29105"/>
    </ligand>
</feature>
<feature type="binding site" evidence="1">
    <location>
        <position position="269"/>
    </location>
    <ligand>
        <name>ATP</name>
        <dbReference type="ChEBI" id="CHEBI:30616"/>
    </ligand>
</feature>
<proteinExistence type="inferred from homology"/>
<name>SYC_YERPY</name>
<keyword id="KW-0030">Aminoacyl-tRNA synthetase</keyword>
<keyword id="KW-0067">ATP-binding</keyword>
<keyword id="KW-0963">Cytoplasm</keyword>
<keyword id="KW-0436">Ligase</keyword>
<keyword id="KW-0479">Metal-binding</keyword>
<keyword id="KW-0547">Nucleotide-binding</keyword>
<keyword id="KW-0648">Protein biosynthesis</keyword>
<keyword id="KW-0862">Zinc</keyword>
<accession>B1JHJ1</accession>
<protein>
    <recommendedName>
        <fullName evidence="1">Cysteine--tRNA ligase</fullName>
        <ecNumber evidence="1">6.1.1.16</ecNumber>
    </recommendedName>
    <alternativeName>
        <fullName evidence="1">Cysteinyl-tRNA synthetase</fullName>
        <shortName evidence="1">CysRS</shortName>
    </alternativeName>
</protein>
<organism>
    <name type="scientific">Yersinia pseudotuberculosis serotype O:3 (strain YPIII)</name>
    <dbReference type="NCBI Taxonomy" id="502800"/>
    <lineage>
        <taxon>Bacteria</taxon>
        <taxon>Pseudomonadati</taxon>
        <taxon>Pseudomonadota</taxon>
        <taxon>Gammaproteobacteria</taxon>
        <taxon>Enterobacterales</taxon>
        <taxon>Yersiniaceae</taxon>
        <taxon>Yersinia</taxon>
    </lineage>
</organism>
<dbReference type="EC" id="6.1.1.16" evidence="1"/>
<dbReference type="EMBL" id="CP000950">
    <property type="protein sequence ID" value="ACA69423.1"/>
    <property type="molecule type" value="Genomic_DNA"/>
</dbReference>
<dbReference type="RefSeq" id="WP_012304481.1">
    <property type="nucleotide sequence ID" value="NZ_CP009792.1"/>
</dbReference>
<dbReference type="SMR" id="B1JHJ1"/>
<dbReference type="KEGG" id="ypy:YPK_3152"/>
<dbReference type="PATRIC" id="fig|502800.11.peg.3879"/>
<dbReference type="GO" id="GO:0005829">
    <property type="term" value="C:cytosol"/>
    <property type="evidence" value="ECO:0007669"/>
    <property type="project" value="TreeGrafter"/>
</dbReference>
<dbReference type="GO" id="GO:0005524">
    <property type="term" value="F:ATP binding"/>
    <property type="evidence" value="ECO:0007669"/>
    <property type="project" value="UniProtKB-UniRule"/>
</dbReference>
<dbReference type="GO" id="GO:0004817">
    <property type="term" value="F:cysteine-tRNA ligase activity"/>
    <property type="evidence" value="ECO:0007669"/>
    <property type="project" value="UniProtKB-UniRule"/>
</dbReference>
<dbReference type="GO" id="GO:0008270">
    <property type="term" value="F:zinc ion binding"/>
    <property type="evidence" value="ECO:0007669"/>
    <property type="project" value="UniProtKB-UniRule"/>
</dbReference>
<dbReference type="GO" id="GO:0006423">
    <property type="term" value="P:cysteinyl-tRNA aminoacylation"/>
    <property type="evidence" value="ECO:0007669"/>
    <property type="project" value="UniProtKB-UniRule"/>
</dbReference>
<dbReference type="CDD" id="cd07963">
    <property type="entry name" value="Anticodon_Ia_Cys"/>
    <property type="match status" value="1"/>
</dbReference>
<dbReference type="CDD" id="cd00672">
    <property type="entry name" value="CysRS_core"/>
    <property type="match status" value="1"/>
</dbReference>
<dbReference type="FunFam" id="1.20.120.1910:FF:000001">
    <property type="entry name" value="Cysteine--tRNA ligase"/>
    <property type="match status" value="1"/>
</dbReference>
<dbReference type="FunFam" id="3.40.50.620:FF:000009">
    <property type="entry name" value="Cysteine--tRNA ligase"/>
    <property type="match status" value="1"/>
</dbReference>
<dbReference type="Gene3D" id="1.20.120.1910">
    <property type="entry name" value="Cysteine-tRNA ligase, C-terminal anti-codon recognition domain"/>
    <property type="match status" value="1"/>
</dbReference>
<dbReference type="Gene3D" id="3.40.50.620">
    <property type="entry name" value="HUPs"/>
    <property type="match status" value="1"/>
</dbReference>
<dbReference type="HAMAP" id="MF_00041">
    <property type="entry name" value="Cys_tRNA_synth"/>
    <property type="match status" value="1"/>
</dbReference>
<dbReference type="InterPro" id="IPR015803">
    <property type="entry name" value="Cys-tRNA-ligase"/>
</dbReference>
<dbReference type="InterPro" id="IPR015273">
    <property type="entry name" value="Cys-tRNA-synt_Ia_DALR"/>
</dbReference>
<dbReference type="InterPro" id="IPR024909">
    <property type="entry name" value="Cys-tRNA/MSH_ligase"/>
</dbReference>
<dbReference type="InterPro" id="IPR056411">
    <property type="entry name" value="CysS_C"/>
</dbReference>
<dbReference type="InterPro" id="IPR014729">
    <property type="entry name" value="Rossmann-like_a/b/a_fold"/>
</dbReference>
<dbReference type="InterPro" id="IPR032678">
    <property type="entry name" value="tRNA-synt_1_cat_dom"/>
</dbReference>
<dbReference type="InterPro" id="IPR009080">
    <property type="entry name" value="tRNAsynth_Ia_anticodon-bd"/>
</dbReference>
<dbReference type="NCBIfam" id="TIGR00435">
    <property type="entry name" value="cysS"/>
    <property type="match status" value="1"/>
</dbReference>
<dbReference type="PANTHER" id="PTHR10890:SF3">
    <property type="entry name" value="CYSTEINE--TRNA LIGASE, CYTOPLASMIC"/>
    <property type="match status" value="1"/>
</dbReference>
<dbReference type="PANTHER" id="PTHR10890">
    <property type="entry name" value="CYSTEINYL-TRNA SYNTHETASE"/>
    <property type="match status" value="1"/>
</dbReference>
<dbReference type="Pfam" id="PF23493">
    <property type="entry name" value="CysS_C"/>
    <property type="match status" value="1"/>
</dbReference>
<dbReference type="Pfam" id="PF09190">
    <property type="entry name" value="DALR_2"/>
    <property type="match status" value="1"/>
</dbReference>
<dbReference type="Pfam" id="PF01406">
    <property type="entry name" value="tRNA-synt_1e"/>
    <property type="match status" value="1"/>
</dbReference>
<dbReference type="PRINTS" id="PR00983">
    <property type="entry name" value="TRNASYNTHCYS"/>
</dbReference>
<dbReference type="SMART" id="SM00840">
    <property type="entry name" value="DALR_2"/>
    <property type="match status" value="1"/>
</dbReference>
<dbReference type="SUPFAM" id="SSF47323">
    <property type="entry name" value="Anticodon-binding domain of a subclass of class I aminoacyl-tRNA synthetases"/>
    <property type="match status" value="1"/>
</dbReference>
<dbReference type="SUPFAM" id="SSF52374">
    <property type="entry name" value="Nucleotidylyl transferase"/>
    <property type="match status" value="1"/>
</dbReference>
<gene>
    <name evidence="1" type="primary">cysS</name>
    <name type="ordered locus">YPK_3152</name>
</gene>
<reference key="1">
    <citation type="submission" date="2008-02" db="EMBL/GenBank/DDBJ databases">
        <title>Complete sequence of Yersinia pseudotuberculosis YPIII.</title>
        <authorList>
            <consortium name="US DOE Joint Genome Institute"/>
            <person name="Copeland A."/>
            <person name="Lucas S."/>
            <person name="Lapidus A."/>
            <person name="Glavina del Rio T."/>
            <person name="Dalin E."/>
            <person name="Tice H."/>
            <person name="Bruce D."/>
            <person name="Goodwin L."/>
            <person name="Pitluck S."/>
            <person name="Munk A.C."/>
            <person name="Brettin T."/>
            <person name="Detter J.C."/>
            <person name="Han C."/>
            <person name="Tapia R."/>
            <person name="Schmutz J."/>
            <person name="Larimer F."/>
            <person name="Land M."/>
            <person name="Hauser L."/>
            <person name="Challacombe J.F."/>
            <person name="Green L."/>
            <person name="Lindler L.E."/>
            <person name="Nikolich M.P."/>
            <person name="Richardson P."/>
        </authorList>
    </citation>
    <scope>NUCLEOTIDE SEQUENCE [LARGE SCALE GENOMIC DNA]</scope>
    <source>
        <strain>YPIII</strain>
    </source>
</reference>
<sequence length="461" mass="52177">MLKIFNTLSRQKEEFKPIHAGKVGMYVCGITIYDLCHIGHGRTFVAFDVVARYLRYLGYSLTYVRNVTDVDDKIIKRAIENNETCEQLTTRMLAEMHKDFDALNLERPDLEPRATHHIAEIIEMTERLIARGHAYVASNGDVMFAVDSDPDYGVLSRQDLDQLQAGARVEVADVKRNPMDFVLWKMSKPGEPRWESPWGPGRPGWHIECSAMNGKQLGAHFDIHGGGSDLMFPHHENEIAQSTCAHDGPYVNYWMHSGMVMIDKEKMSKSLNNFFTIRDVLAYYDAETVRYFLMSGHYRSQLNYSEENLKQARASLERLYTALRGTDANATPAGGVEFEARFRTAMDDDFNTPEAYSVLFDIAREVNRLKNEDMAAANGLAAELRKLAQVLGLLEQDPELFLQGGAQADDDEVAKIEALIKQRNDARSSKDWALADAARDQLNDLGIVLEDGPQGTTWRRK</sequence>
<comment type="catalytic activity">
    <reaction evidence="1">
        <text>tRNA(Cys) + L-cysteine + ATP = L-cysteinyl-tRNA(Cys) + AMP + diphosphate</text>
        <dbReference type="Rhea" id="RHEA:17773"/>
        <dbReference type="Rhea" id="RHEA-COMP:9661"/>
        <dbReference type="Rhea" id="RHEA-COMP:9679"/>
        <dbReference type="ChEBI" id="CHEBI:30616"/>
        <dbReference type="ChEBI" id="CHEBI:33019"/>
        <dbReference type="ChEBI" id="CHEBI:35235"/>
        <dbReference type="ChEBI" id="CHEBI:78442"/>
        <dbReference type="ChEBI" id="CHEBI:78517"/>
        <dbReference type="ChEBI" id="CHEBI:456215"/>
        <dbReference type="EC" id="6.1.1.16"/>
    </reaction>
</comment>
<comment type="cofactor">
    <cofactor evidence="1">
        <name>Zn(2+)</name>
        <dbReference type="ChEBI" id="CHEBI:29105"/>
    </cofactor>
    <text evidence="1">Binds 1 zinc ion per subunit.</text>
</comment>
<comment type="subunit">
    <text evidence="1">Monomer.</text>
</comment>
<comment type="subcellular location">
    <subcellularLocation>
        <location evidence="1">Cytoplasm</location>
    </subcellularLocation>
</comment>
<comment type="similarity">
    <text evidence="1">Belongs to the class-I aminoacyl-tRNA synthetase family.</text>
</comment>
<evidence type="ECO:0000255" key="1">
    <source>
        <dbReference type="HAMAP-Rule" id="MF_00041"/>
    </source>
</evidence>